<proteinExistence type="evidence at transcript level"/>
<keyword id="KW-1015">Disulfide bond</keyword>
<keyword id="KW-0325">Glycoprotein</keyword>
<keyword id="KW-0393">Immunoglobulin domain</keyword>
<keyword id="KW-0433">Leucine-rich repeat</keyword>
<keyword id="KW-0472">Membrane</keyword>
<keyword id="KW-1185">Reference proteome</keyword>
<keyword id="KW-0677">Repeat</keyword>
<keyword id="KW-0732">Signal</keyword>
<keyword id="KW-0812">Transmembrane</keyword>
<keyword id="KW-1133">Transmembrane helix</keyword>
<gene>
    <name type="primary">Lingo3</name>
    <name type="synonym">Lrrn6b</name>
</gene>
<accession>Q6GQU6</accession>
<accession>E9QK50</accession>
<evidence type="ECO:0000255" key="1"/>
<evidence type="ECO:0000255" key="2">
    <source>
        <dbReference type="PROSITE-ProRule" id="PRU00114"/>
    </source>
</evidence>
<evidence type="ECO:0000305" key="3"/>
<protein>
    <recommendedName>
        <fullName>Leucine-rich repeat and immunoglobulin-like domain-containing nogo receptor-interacting protein 3</fullName>
    </recommendedName>
    <alternativeName>
        <fullName>Leucine-rich repeat neuronal protein 6B</fullName>
    </alternativeName>
</protein>
<name>LIGO3_MOUSE</name>
<comment type="subcellular location">
    <subcellularLocation>
        <location evidence="3">Membrane</location>
        <topology evidence="3">Single-pass type I membrane protein</topology>
    </subcellularLocation>
</comment>
<organism>
    <name type="scientific">Mus musculus</name>
    <name type="common">Mouse</name>
    <dbReference type="NCBI Taxonomy" id="10090"/>
    <lineage>
        <taxon>Eukaryota</taxon>
        <taxon>Metazoa</taxon>
        <taxon>Chordata</taxon>
        <taxon>Craniata</taxon>
        <taxon>Vertebrata</taxon>
        <taxon>Euteleostomi</taxon>
        <taxon>Mammalia</taxon>
        <taxon>Eutheria</taxon>
        <taxon>Euarchontoglires</taxon>
        <taxon>Glires</taxon>
        <taxon>Rodentia</taxon>
        <taxon>Myomorpha</taxon>
        <taxon>Muroidea</taxon>
        <taxon>Muridae</taxon>
        <taxon>Murinae</taxon>
        <taxon>Mus</taxon>
        <taxon>Mus</taxon>
    </lineage>
</organism>
<reference key="1">
    <citation type="journal article" date="2009" name="PLoS Biol.">
        <title>Lineage-specific biology revealed by a finished genome assembly of the mouse.</title>
        <authorList>
            <person name="Church D.M."/>
            <person name="Goodstadt L."/>
            <person name="Hillier L.W."/>
            <person name="Zody M.C."/>
            <person name="Goldstein S."/>
            <person name="She X."/>
            <person name="Bult C.J."/>
            <person name="Agarwala R."/>
            <person name="Cherry J.L."/>
            <person name="DiCuccio M."/>
            <person name="Hlavina W."/>
            <person name="Kapustin Y."/>
            <person name="Meric P."/>
            <person name="Maglott D."/>
            <person name="Birtle Z."/>
            <person name="Marques A.C."/>
            <person name="Graves T."/>
            <person name="Zhou S."/>
            <person name="Teague B."/>
            <person name="Potamousis K."/>
            <person name="Churas C."/>
            <person name="Place M."/>
            <person name="Herschleb J."/>
            <person name="Runnheim R."/>
            <person name="Forrest D."/>
            <person name="Amos-Landgraf J."/>
            <person name="Schwartz D.C."/>
            <person name="Cheng Z."/>
            <person name="Lindblad-Toh K."/>
            <person name="Eichler E.E."/>
            <person name="Ponting C.P."/>
        </authorList>
    </citation>
    <scope>NUCLEOTIDE SEQUENCE [LARGE SCALE GENOMIC DNA]</scope>
    <source>
        <strain>C57BL/6J</strain>
    </source>
</reference>
<reference key="2">
    <citation type="journal article" date="2004" name="Genome Res.">
        <title>The status, quality, and expansion of the NIH full-length cDNA project: the Mammalian Gene Collection (MGC).</title>
        <authorList>
            <consortium name="The MGC Project Team"/>
        </authorList>
    </citation>
    <scope>NUCLEOTIDE SEQUENCE [LARGE SCALE MRNA]</scope>
    <source>
        <strain>C57BL/6J</strain>
        <tissue>Brain</tissue>
    </source>
</reference>
<feature type="signal peptide" evidence="1">
    <location>
        <begin position="1"/>
        <end position="23"/>
    </location>
</feature>
<feature type="chain" id="PRO_0000326530" description="Leucine-rich repeat and immunoglobulin-like domain-containing nogo receptor-interacting protein 3">
    <location>
        <begin position="24"/>
        <end position="589"/>
    </location>
</feature>
<feature type="topological domain" description="Extracellular" evidence="1">
    <location>
        <begin position="24"/>
        <end position="528"/>
    </location>
</feature>
<feature type="transmembrane region" description="Helical" evidence="1">
    <location>
        <begin position="529"/>
        <end position="549"/>
    </location>
</feature>
<feature type="topological domain" description="Cytoplasmic" evidence="1">
    <location>
        <begin position="550"/>
        <end position="589"/>
    </location>
</feature>
<feature type="domain" description="LRRNT">
    <location>
        <begin position="24"/>
        <end position="53"/>
    </location>
</feature>
<feature type="repeat" description="LRR 1">
    <location>
        <begin position="54"/>
        <end position="75"/>
    </location>
</feature>
<feature type="repeat" description="LRR 2">
    <location>
        <begin position="78"/>
        <end position="99"/>
    </location>
</feature>
<feature type="repeat" description="LRR 3">
    <location>
        <begin position="102"/>
        <end position="123"/>
    </location>
</feature>
<feature type="repeat" description="LRR 4">
    <location>
        <begin position="126"/>
        <end position="147"/>
    </location>
</feature>
<feature type="repeat" description="LRR 5">
    <location>
        <begin position="150"/>
        <end position="171"/>
    </location>
</feature>
<feature type="repeat" description="LRR 6">
    <location>
        <begin position="174"/>
        <end position="195"/>
    </location>
</feature>
<feature type="repeat" description="LRR 7">
    <location>
        <begin position="206"/>
        <end position="227"/>
    </location>
</feature>
<feature type="repeat" description="LRR 8">
    <location>
        <begin position="246"/>
        <end position="267"/>
    </location>
</feature>
<feature type="repeat" description="LRR 9">
    <location>
        <begin position="270"/>
        <end position="291"/>
    </location>
</feature>
<feature type="repeat" description="LRR 10">
    <location>
        <begin position="294"/>
        <end position="315"/>
    </location>
</feature>
<feature type="repeat" description="LRR 11">
    <location>
        <begin position="318"/>
        <end position="339"/>
    </location>
</feature>
<feature type="domain" description="LRRCT">
    <location>
        <begin position="351"/>
        <end position="405"/>
    </location>
</feature>
<feature type="domain" description="Ig-like C2-type">
    <location>
        <begin position="406"/>
        <end position="495"/>
    </location>
</feature>
<feature type="glycosylation site" description="N-linked (GlcNAc...) asparagine" evidence="1">
    <location>
        <position position="184"/>
    </location>
</feature>
<feature type="glycosylation site" description="N-linked (GlcNAc...) asparagine" evidence="1">
    <location>
        <position position="246"/>
    </location>
</feature>
<feature type="glycosylation site" description="N-linked (GlcNAc...) asparagine" evidence="1">
    <location>
        <position position="256"/>
    </location>
</feature>
<feature type="glycosylation site" description="N-linked (GlcNAc...) asparagine" evidence="1">
    <location>
        <position position="275"/>
    </location>
</feature>
<feature type="glycosylation site" description="N-linked (GlcNAc...) asparagine" evidence="1">
    <location>
        <position position="323"/>
    </location>
</feature>
<feature type="glycosylation site" description="N-linked (GlcNAc...) asparagine" evidence="1">
    <location>
        <position position="487"/>
    </location>
</feature>
<feature type="glycosylation site" description="N-linked (GlcNAc...) asparagine" evidence="1">
    <location>
        <position position="501"/>
    </location>
</feature>
<feature type="glycosylation site" description="N-linked (GlcNAc...) asparagine" evidence="1">
    <location>
        <position position="509"/>
    </location>
</feature>
<feature type="disulfide bond" evidence="2">
    <location>
        <begin position="428"/>
        <end position="479"/>
    </location>
</feature>
<feature type="sequence conflict" description="In Ref. 2; AAH72620." evidence="3" ref="2">
    <original>L</original>
    <variation>F</variation>
    <location>
        <position position="76"/>
    </location>
</feature>
<dbReference type="EMBL" id="AC166937">
    <property type="status" value="NOT_ANNOTATED_CDS"/>
    <property type="molecule type" value="Genomic_DNA"/>
</dbReference>
<dbReference type="EMBL" id="BC072620">
    <property type="protein sequence ID" value="AAH72620.1"/>
    <property type="molecule type" value="mRNA"/>
</dbReference>
<dbReference type="CCDS" id="CCDS24035.1"/>
<dbReference type="RefSeq" id="NP_001013780.2">
    <property type="nucleotide sequence ID" value="NM_001013758.2"/>
</dbReference>
<dbReference type="RefSeq" id="NP_001346675.1">
    <property type="nucleotide sequence ID" value="NM_001359746.1"/>
</dbReference>
<dbReference type="RefSeq" id="XP_006513683.1">
    <property type="nucleotide sequence ID" value="XM_006513620.5"/>
</dbReference>
<dbReference type="RefSeq" id="XP_006513684.1">
    <property type="nucleotide sequence ID" value="XM_006513621.3"/>
</dbReference>
<dbReference type="RefSeq" id="XP_006513685.1">
    <property type="nucleotide sequence ID" value="XM_006513622.5"/>
</dbReference>
<dbReference type="RefSeq" id="XP_006513686.1">
    <property type="nucleotide sequence ID" value="XM_006513623.4"/>
</dbReference>
<dbReference type="SMR" id="Q6GQU6"/>
<dbReference type="FunCoup" id="Q6GQU6">
    <property type="interactions" value="160"/>
</dbReference>
<dbReference type="STRING" id="10090.ENSMUSP00000054960"/>
<dbReference type="GlyConnect" id="2467">
    <property type="glycosylation" value="3 N-Linked glycans (2 sites)"/>
</dbReference>
<dbReference type="GlyCosmos" id="Q6GQU6">
    <property type="glycosylation" value="8 sites, 3 glycans"/>
</dbReference>
<dbReference type="GlyGen" id="Q6GQU6">
    <property type="glycosylation" value="12 sites, 7 N-linked glycans (7 sites), 1 O-linked glycan (1 site)"/>
</dbReference>
<dbReference type="iPTMnet" id="Q6GQU6"/>
<dbReference type="PhosphoSitePlus" id="Q6GQU6"/>
<dbReference type="PaxDb" id="10090-ENSMUSP00000054960"/>
<dbReference type="PeptideAtlas" id="Q6GQU6"/>
<dbReference type="ProteomicsDB" id="252474"/>
<dbReference type="Antibodypedia" id="64907">
    <property type="antibodies" value="67 antibodies from 13 providers"/>
</dbReference>
<dbReference type="Ensembl" id="ENSMUST00000053986.9">
    <property type="protein sequence ID" value="ENSMUSP00000054960.8"/>
    <property type="gene ID" value="ENSMUSG00000051067.9"/>
</dbReference>
<dbReference type="GeneID" id="237403"/>
<dbReference type="KEGG" id="mmu:237403"/>
<dbReference type="UCSC" id="uc007gey.3">
    <property type="organism name" value="mouse"/>
</dbReference>
<dbReference type="AGR" id="MGI:3609246"/>
<dbReference type="CTD" id="645191"/>
<dbReference type="MGI" id="MGI:3609246">
    <property type="gene designation" value="Lingo3"/>
</dbReference>
<dbReference type="VEuPathDB" id="HostDB:ENSMUSG00000051067"/>
<dbReference type="eggNOG" id="KOG0619">
    <property type="taxonomic scope" value="Eukaryota"/>
</dbReference>
<dbReference type="GeneTree" id="ENSGT00940000162661"/>
<dbReference type="HOGENOM" id="CLU_000288_18_24_1"/>
<dbReference type="InParanoid" id="Q6GQU6"/>
<dbReference type="OMA" id="KFTMKMI"/>
<dbReference type="OrthoDB" id="10061535at2759"/>
<dbReference type="PhylomeDB" id="Q6GQU6"/>
<dbReference type="TreeFam" id="TF334360"/>
<dbReference type="BioGRID-ORCS" id="237403">
    <property type="hits" value="8 hits in 78 CRISPR screens"/>
</dbReference>
<dbReference type="PRO" id="PR:Q6GQU6"/>
<dbReference type="Proteomes" id="UP000000589">
    <property type="component" value="Chromosome 10"/>
</dbReference>
<dbReference type="RNAct" id="Q6GQU6">
    <property type="molecule type" value="protein"/>
</dbReference>
<dbReference type="Bgee" id="ENSMUSG00000051067">
    <property type="expression patterns" value="Expressed in retinal neural layer and 95 other cell types or tissues"/>
</dbReference>
<dbReference type="ExpressionAtlas" id="Q6GQU6">
    <property type="expression patterns" value="baseline and differential"/>
</dbReference>
<dbReference type="GO" id="GO:0016020">
    <property type="term" value="C:membrane"/>
    <property type="evidence" value="ECO:0007669"/>
    <property type="project" value="UniProtKB-SubCell"/>
</dbReference>
<dbReference type="FunFam" id="2.60.40.10:FF:000076">
    <property type="entry name" value="Leucine-rich repeat and Ig domain-containing 4"/>
    <property type="match status" value="1"/>
</dbReference>
<dbReference type="FunFam" id="3.80.10.10:FF:000014">
    <property type="entry name" value="Leucine-rich repeat and immunoglobulin-like domain-containing nogo receptor-interacting protein 1"/>
    <property type="match status" value="1"/>
</dbReference>
<dbReference type="Gene3D" id="2.60.40.10">
    <property type="entry name" value="Immunoglobulins"/>
    <property type="match status" value="1"/>
</dbReference>
<dbReference type="Gene3D" id="3.80.10.10">
    <property type="entry name" value="Ribonuclease Inhibitor"/>
    <property type="match status" value="1"/>
</dbReference>
<dbReference type="InterPro" id="IPR000483">
    <property type="entry name" value="Cys-rich_flank_reg_C"/>
</dbReference>
<dbReference type="InterPro" id="IPR007110">
    <property type="entry name" value="Ig-like_dom"/>
</dbReference>
<dbReference type="InterPro" id="IPR036179">
    <property type="entry name" value="Ig-like_dom_sf"/>
</dbReference>
<dbReference type="InterPro" id="IPR013783">
    <property type="entry name" value="Ig-like_fold"/>
</dbReference>
<dbReference type="InterPro" id="IPR013098">
    <property type="entry name" value="Ig_I-set"/>
</dbReference>
<dbReference type="InterPro" id="IPR003599">
    <property type="entry name" value="Ig_sub"/>
</dbReference>
<dbReference type="InterPro" id="IPR003598">
    <property type="entry name" value="Ig_sub2"/>
</dbReference>
<dbReference type="InterPro" id="IPR001611">
    <property type="entry name" value="Leu-rich_rpt"/>
</dbReference>
<dbReference type="InterPro" id="IPR003591">
    <property type="entry name" value="Leu-rich_rpt_typical-subtyp"/>
</dbReference>
<dbReference type="InterPro" id="IPR032675">
    <property type="entry name" value="LRR_dom_sf"/>
</dbReference>
<dbReference type="InterPro" id="IPR050541">
    <property type="entry name" value="LRR_TM_domain-containing"/>
</dbReference>
<dbReference type="InterPro" id="IPR000372">
    <property type="entry name" value="LRRNT"/>
</dbReference>
<dbReference type="PANTHER" id="PTHR24369">
    <property type="entry name" value="ANTIGEN BSP, PUTATIVE-RELATED"/>
    <property type="match status" value="1"/>
</dbReference>
<dbReference type="PANTHER" id="PTHR24369:SF207">
    <property type="entry name" value="LEUCINE RICH REPEAT AND IG DOMAIN CONTAINING 3"/>
    <property type="match status" value="1"/>
</dbReference>
<dbReference type="Pfam" id="PF07679">
    <property type="entry name" value="I-set"/>
    <property type="match status" value="1"/>
</dbReference>
<dbReference type="Pfam" id="PF00560">
    <property type="entry name" value="LRR_1"/>
    <property type="match status" value="1"/>
</dbReference>
<dbReference type="Pfam" id="PF13855">
    <property type="entry name" value="LRR_8"/>
    <property type="match status" value="3"/>
</dbReference>
<dbReference type="SMART" id="SM00409">
    <property type="entry name" value="IG"/>
    <property type="match status" value="1"/>
</dbReference>
<dbReference type="SMART" id="SM00408">
    <property type="entry name" value="IGc2"/>
    <property type="match status" value="1"/>
</dbReference>
<dbReference type="SMART" id="SM00369">
    <property type="entry name" value="LRR_TYP"/>
    <property type="match status" value="9"/>
</dbReference>
<dbReference type="SMART" id="SM00082">
    <property type="entry name" value="LRRCT"/>
    <property type="match status" value="1"/>
</dbReference>
<dbReference type="SMART" id="SM00013">
    <property type="entry name" value="LRRNT"/>
    <property type="match status" value="1"/>
</dbReference>
<dbReference type="SUPFAM" id="SSF48726">
    <property type="entry name" value="Immunoglobulin"/>
    <property type="match status" value="1"/>
</dbReference>
<dbReference type="SUPFAM" id="SSF52058">
    <property type="entry name" value="L domain-like"/>
    <property type="match status" value="1"/>
</dbReference>
<dbReference type="PROSITE" id="PS50835">
    <property type="entry name" value="IG_LIKE"/>
    <property type="match status" value="1"/>
</dbReference>
<dbReference type="PROSITE" id="PS51450">
    <property type="entry name" value="LRR"/>
    <property type="match status" value="8"/>
</dbReference>
<sequence>MTCWLHMLGLHLLLLPTAPLAAGCPARCECSASTRTVACGRRRLTAIPEGIPAETRMLELSRNRIRCLNPGDLASLPTLEELDLNHNVIAHVEPGAFANLPRLRVLRLRGNQLKLIPPGVFTHLDSLTLLDLSENKLVILLDFSFQDLRSLQRLEVGDNDLVFISRRAFAGLLGLAELTLERCNLTSLSPESLGHLRGLGALRLRHLAIAALEDQNFQKLPGLSHLEIDNWPLLEEVAPGSLRGLNLTSLSITHTNITAVPAAALRQQAHLTCLNLSHNPISMVPRGSFRDLVRLRELHLAGALLAVIEPQAFVGLRQIRLLNLSDNLLSTLEENTFHSVNTLETLRVDGNPLACDCRLLWIVQRRKTLNFDGRLPACATPAEVRGDALHNLPDSVLFEYFVCRKPKIRERRLQHVTATEGDDVRFLCRAEGEPAPTVAWVTPQHHSVTAASRGRARVLPGGTLTIADTRPQDSGTYTCVASNAGGNDTYFATLTVQPAANRTQGDGHNETQVGVRFPLDLTTILVSTAMGCITFLGVVLFCFLLLFVWSRGRGQHKNNFSVEYSFRKVDGPAAAAGQGGARKFNMKMI</sequence>